<comment type="similarity">
    <text evidence="1">Belongs to the UPF0223 family.</text>
</comment>
<proteinExistence type="inferred from homology"/>
<organism>
    <name type="scientific">Streptococcus pneumoniae (strain CGSP14)</name>
    <dbReference type="NCBI Taxonomy" id="516950"/>
    <lineage>
        <taxon>Bacteria</taxon>
        <taxon>Bacillati</taxon>
        <taxon>Bacillota</taxon>
        <taxon>Bacilli</taxon>
        <taxon>Lactobacillales</taxon>
        <taxon>Streptococcaceae</taxon>
        <taxon>Streptococcus</taxon>
    </lineage>
</organism>
<accession>B2IQM0</accession>
<name>Y1392_STRPS</name>
<sequence length="92" mass="10307">MNKQYSYPLDLSWSTEELASVLSFFNDVEAAYEGKVEAKKLLDSYKGFKAVVPSKSEEKRLGREFETVSGYSLYRAVQAAKEKGKGKISLGK</sequence>
<dbReference type="EMBL" id="CP001033">
    <property type="protein sequence ID" value="ACB90644.1"/>
    <property type="molecule type" value="Genomic_DNA"/>
</dbReference>
<dbReference type="RefSeq" id="WP_001041976.1">
    <property type="nucleotide sequence ID" value="NC_010582.1"/>
</dbReference>
<dbReference type="SMR" id="B2IQM0"/>
<dbReference type="KEGG" id="spw:SPCG_1392"/>
<dbReference type="HOGENOM" id="CLU_166693_0_0_9"/>
<dbReference type="Gene3D" id="1.10.220.80">
    <property type="entry name" value="BH2638-like"/>
    <property type="match status" value="1"/>
</dbReference>
<dbReference type="HAMAP" id="MF_01041">
    <property type="entry name" value="UPF0223"/>
    <property type="match status" value="1"/>
</dbReference>
<dbReference type="InterPro" id="IPR023324">
    <property type="entry name" value="BH2638-like_sf"/>
</dbReference>
<dbReference type="InterPro" id="IPR007920">
    <property type="entry name" value="UPF0223"/>
</dbReference>
<dbReference type="NCBIfam" id="NF003353">
    <property type="entry name" value="PRK04387.1"/>
    <property type="match status" value="1"/>
</dbReference>
<dbReference type="Pfam" id="PF05256">
    <property type="entry name" value="UPF0223"/>
    <property type="match status" value="1"/>
</dbReference>
<dbReference type="PIRSF" id="PIRSF037260">
    <property type="entry name" value="UPF0223"/>
    <property type="match status" value="1"/>
</dbReference>
<dbReference type="SUPFAM" id="SSF158504">
    <property type="entry name" value="BH2638-like"/>
    <property type="match status" value="1"/>
</dbReference>
<reference key="1">
    <citation type="journal article" date="2009" name="BMC Genomics">
        <title>Genome evolution driven by host adaptations results in a more virulent and antimicrobial-resistant Streptococcus pneumoniae serotype 14.</title>
        <authorList>
            <person name="Ding F."/>
            <person name="Tang P."/>
            <person name="Hsu M.-H."/>
            <person name="Cui P."/>
            <person name="Hu S."/>
            <person name="Yu J."/>
            <person name="Chiu C.-H."/>
        </authorList>
    </citation>
    <scope>NUCLEOTIDE SEQUENCE [LARGE SCALE GENOMIC DNA]</scope>
    <source>
        <strain>CGSP14</strain>
    </source>
</reference>
<protein>
    <recommendedName>
        <fullName evidence="1">UPF0223 protein SPCG_1392</fullName>
    </recommendedName>
</protein>
<gene>
    <name type="ordered locus">SPCG_1392</name>
</gene>
<feature type="chain" id="PRO_1000136032" description="UPF0223 protein SPCG_1392">
    <location>
        <begin position="1"/>
        <end position="92"/>
    </location>
</feature>
<evidence type="ECO:0000255" key="1">
    <source>
        <dbReference type="HAMAP-Rule" id="MF_01041"/>
    </source>
</evidence>